<proteinExistence type="inferred from homology"/>
<protein>
    <recommendedName>
        <fullName evidence="1">tRNA modification GTPase MnmE</fullName>
        <ecNumber evidence="1">3.6.-.-</ecNumber>
    </recommendedName>
</protein>
<name>MNME_CYTH3</name>
<feature type="chain" id="PRO_0000345767" description="tRNA modification GTPase MnmE">
    <location>
        <begin position="1"/>
        <end position="460"/>
    </location>
</feature>
<feature type="domain" description="TrmE-type G">
    <location>
        <begin position="224"/>
        <end position="382"/>
    </location>
</feature>
<feature type="binding site" evidence="1">
    <location>
        <position position="29"/>
    </location>
    <ligand>
        <name>(6S)-5-formyl-5,6,7,8-tetrahydrofolate</name>
        <dbReference type="ChEBI" id="CHEBI:57457"/>
    </ligand>
</feature>
<feature type="binding site" evidence="1">
    <location>
        <position position="89"/>
    </location>
    <ligand>
        <name>(6S)-5-formyl-5,6,7,8-tetrahydrofolate</name>
        <dbReference type="ChEBI" id="CHEBI:57457"/>
    </ligand>
</feature>
<feature type="binding site" evidence="1">
    <location>
        <position position="128"/>
    </location>
    <ligand>
        <name>(6S)-5-formyl-5,6,7,8-tetrahydrofolate</name>
        <dbReference type="ChEBI" id="CHEBI:57457"/>
    </ligand>
</feature>
<feature type="binding site" evidence="1">
    <location>
        <begin position="234"/>
        <end position="239"/>
    </location>
    <ligand>
        <name>GTP</name>
        <dbReference type="ChEBI" id="CHEBI:37565"/>
    </ligand>
</feature>
<feature type="binding site" evidence="1">
    <location>
        <position position="234"/>
    </location>
    <ligand>
        <name>K(+)</name>
        <dbReference type="ChEBI" id="CHEBI:29103"/>
    </ligand>
</feature>
<feature type="binding site" evidence="1">
    <location>
        <position position="238"/>
    </location>
    <ligand>
        <name>Mg(2+)</name>
        <dbReference type="ChEBI" id="CHEBI:18420"/>
    </ligand>
</feature>
<feature type="binding site" evidence="1">
    <location>
        <begin position="253"/>
        <end position="259"/>
    </location>
    <ligand>
        <name>GTP</name>
        <dbReference type="ChEBI" id="CHEBI:37565"/>
    </ligand>
</feature>
<feature type="binding site" evidence="1">
    <location>
        <position position="253"/>
    </location>
    <ligand>
        <name>K(+)</name>
        <dbReference type="ChEBI" id="CHEBI:29103"/>
    </ligand>
</feature>
<feature type="binding site" evidence="1">
    <location>
        <position position="255"/>
    </location>
    <ligand>
        <name>K(+)</name>
        <dbReference type="ChEBI" id="CHEBI:29103"/>
    </ligand>
</feature>
<feature type="binding site" evidence="1">
    <location>
        <position position="258"/>
    </location>
    <ligand>
        <name>K(+)</name>
        <dbReference type="ChEBI" id="CHEBI:29103"/>
    </ligand>
</feature>
<feature type="binding site" evidence="1">
    <location>
        <position position="259"/>
    </location>
    <ligand>
        <name>Mg(2+)</name>
        <dbReference type="ChEBI" id="CHEBI:18420"/>
    </ligand>
</feature>
<feature type="binding site" evidence="1">
    <location>
        <begin position="278"/>
        <end position="281"/>
    </location>
    <ligand>
        <name>GTP</name>
        <dbReference type="ChEBI" id="CHEBI:37565"/>
    </ligand>
</feature>
<feature type="binding site" evidence="1">
    <location>
        <position position="460"/>
    </location>
    <ligand>
        <name>(6S)-5-formyl-5,6,7,8-tetrahydrofolate</name>
        <dbReference type="ChEBI" id="CHEBI:57457"/>
    </ligand>
</feature>
<keyword id="KW-0963">Cytoplasm</keyword>
<keyword id="KW-0342">GTP-binding</keyword>
<keyword id="KW-0378">Hydrolase</keyword>
<keyword id="KW-0460">Magnesium</keyword>
<keyword id="KW-0479">Metal-binding</keyword>
<keyword id="KW-0547">Nucleotide-binding</keyword>
<keyword id="KW-0630">Potassium</keyword>
<keyword id="KW-1185">Reference proteome</keyword>
<keyword id="KW-0819">tRNA processing</keyword>
<gene>
    <name evidence="1" type="primary">mnmE</name>
    <name evidence="1" type="synonym">trmE</name>
    <name type="ordered locus">CHU_2030</name>
</gene>
<dbReference type="EC" id="3.6.-.-" evidence="1"/>
<dbReference type="EMBL" id="CP000383">
    <property type="protein sequence ID" value="ABG59296.1"/>
    <property type="molecule type" value="Genomic_DNA"/>
</dbReference>
<dbReference type="RefSeq" id="WP_011585413.1">
    <property type="nucleotide sequence ID" value="NC_008255.1"/>
</dbReference>
<dbReference type="SMR" id="Q11TG8"/>
<dbReference type="STRING" id="269798.CHU_2030"/>
<dbReference type="KEGG" id="chu:CHU_2030"/>
<dbReference type="eggNOG" id="COG0486">
    <property type="taxonomic scope" value="Bacteria"/>
</dbReference>
<dbReference type="HOGENOM" id="CLU_019624_4_1_10"/>
<dbReference type="OrthoDB" id="9805918at2"/>
<dbReference type="Proteomes" id="UP000001822">
    <property type="component" value="Chromosome"/>
</dbReference>
<dbReference type="GO" id="GO:0005829">
    <property type="term" value="C:cytosol"/>
    <property type="evidence" value="ECO:0007669"/>
    <property type="project" value="TreeGrafter"/>
</dbReference>
<dbReference type="GO" id="GO:0005525">
    <property type="term" value="F:GTP binding"/>
    <property type="evidence" value="ECO:0007669"/>
    <property type="project" value="UniProtKB-UniRule"/>
</dbReference>
<dbReference type="GO" id="GO:0003924">
    <property type="term" value="F:GTPase activity"/>
    <property type="evidence" value="ECO:0007669"/>
    <property type="project" value="UniProtKB-UniRule"/>
</dbReference>
<dbReference type="GO" id="GO:0046872">
    <property type="term" value="F:metal ion binding"/>
    <property type="evidence" value="ECO:0007669"/>
    <property type="project" value="UniProtKB-KW"/>
</dbReference>
<dbReference type="GO" id="GO:0030488">
    <property type="term" value="P:tRNA methylation"/>
    <property type="evidence" value="ECO:0007669"/>
    <property type="project" value="TreeGrafter"/>
</dbReference>
<dbReference type="GO" id="GO:0002098">
    <property type="term" value="P:tRNA wobble uridine modification"/>
    <property type="evidence" value="ECO:0007669"/>
    <property type="project" value="TreeGrafter"/>
</dbReference>
<dbReference type="CDD" id="cd04164">
    <property type="entry name" value="trmE"/>
    <property type="match status" value="1"/>
</dbReference>
<dbReference type="CDD" id="cd14858">
    <property type="entry name" value="TrmE_N"/>
    <property type="match status" value="1"/>
</dbReference>
<dbReference type="FunFam" id="3.30.1360.120:FF:000003">
    <property type="entry name" value="tRNA modification GTPase MnmE"/>
    <property type="match status" value="1"/>
</dbReference>
<dbReference type="FunFam" id="3.40.50.300:FF:001376">
    <property type="entry name" value="tRNA modification GTPase MnmE"/>
    <property type="match status" value="1"/>
</dbReference>
<dbReference type="Gene3D" id="3.40.50.300">
    <property type="entry name" value="P-loop containing nucleotide triphosphate hydrolases"/>
    <property type="match status" value="1"/>
</dbReference>
<dbReference type="Gene3D" id="3.30.1360.120">
    <property type="entry name" value="Probable tRNA modification gtpase trme, domain 1"/>
    <property type="match status" value="1"/>
</dbReference>
<dbReference type="Gene3D" id="1.20.120.430">
    <property type="entry name" value="tRNA modification GTPase MnmE domain 2"/>
    <property type="match status" value="1"/>
</dbReference>
<dbReference type="HAMAP" id="MF_00379">
    <property type="entry name" value="GTPase_MnmE"/>
    <property type="match status" value="1"/>
</dbReference>
<dbReference type="InterPro" id="IPR031168">
    <property type="entry name" value="G_TrmE"/>
</dbReference>
<dbReference type="InterPro" id="IPR006073">
    <property type="entry name" value="GTP-bd"/>
</dbReference>
<dbReference type="InterPro" id="IPR018948">
    <property type="entry name" value="GTP-bd_TrmE_N"/>
</dbReference>
<dbReference type="InterPro" id="IPR004520">
    <property type="entry name" value="GTPase_MnmE"/>
</dbReference>
<dbReference type="InterPro" id="IPR027368">
    <property type="entry name" value="MnmE_dom2"/>
</dbReference>
<dbReference type="InterPro" id="IPR025867">
    <property type="entry name" value="MnmE_helical"/>
</dbReference>
<dbReference type="InterPro" id="IPR027417">
    <property type="entry name" value="P-loop_NTPase"/>
</dbReference>
<dbReference type="InterPro" id="IPR005225">
    <property type="entry name" value="Small_GTP-bd"/>
</dbReference>
<dbReference type="InterPro" id="IPR006689">
    <property type="entry name" value="Small_GTPase_ARF/SAR"/>
</dbReference>
<dbReference type="InterPro" id="IPR027266">
    <property type="entry name" value="TrmE/GcvT_dom1"/>
</dbReference>
<dbReference type="NCBIfam" id="TIGR00450">
    <property type="entry name" value="mnmE_trmE_thdF"/>
    <property type="match status" value="1"/>
</dbReference>
<dbReference type="NCBIfam" id="NF003661">
    <property type="entry name" value="PRK05291.1-3"/>
    <property type="match status" value="1"/>
</dbReference>
<dbReference type="NCBIfam" id="TIGR00231">
    <property type="entry name" value="small_GTP"/>
    <property type="match status" value="1"/>
</dbReference>
<dbReference type="PANTHER" id="PTHR42714">
    <property type="entry name" value="TRNA MODIFICATION GTPASE GTPBP3"/>
    <property type="match status" value="1"/>
</dbReference>
<dbReference type="PANTHER" id="PTHR42714:SF2">
    <property type="entry name" value="TRNA MODIFICATION GTPASE GTPBP3, MITOCHONDRIAL"/>
    <property type="match status" value="1"/>
</dbReference>
<dbReference type="Pfam" id="PF01926">
    <property type="entry name" value="MMR_HSR1"/>
    <property type="match status" value="1"/>
</dbReference>
<dbReference type="Pfam" id="PF12631">
    <property type="entry name" value="MnmE_helical"/>
    <property type="match status" value="1"/>
</dbReference>
<dbReference type="Pfam" id="PF10396">
    <property type="entry name" value="TrmE_N"/>
    <property type="match status" value="1"/>
</dbReference>
<dbReference type="PRINTS" id="PR00328">
    <property type="entry name" value="SAR1GTPBP"/>
</dbReference>
<dbReference type="SUPFAM" id="SSF52540">
    <property type="entry name" value="P-loop containing nucleoside triphosphate hydrolases"/>
    <property type="match status" value="1"/>
</dbReference>
<dbReference type="SUPFAM" id="SSF116878">
    <property type="entry name" value="TrmE connector domain"/>
    <property type="match status" value="1"/>
</dbReference>
<dbReference type="PROSITE" id="PS51709">
    <property type="entry name" value="G_TRME"/>
    <property type="match status" value="1"/>
</dbReference>
<reference key="1">
    <citation type="journal article" date="2007" name="Appl. Environ. Microbiol.">
        <title>Genome sequence of the cellulolytic gliding bacterium Cytophaga hutchinsonii.</title>
        <authorList>
            <person name="Xie G."/>
            <person name="Bruce D.C."/>
            <person name="Challacombe J.F."/>
            <person name="Chertkov O."/>
            <person name="Detter J.C."/>
            <person name="Gilna P."/>
            <person name="Han C.S."/>
            <person name="Lucas S."/>
            <person name="Misra M."/>
            <person name="Myers G.L."/>
            <person name="Richardson P."/>
            <person name="Tapia R."/>
            <person name="Thayer N."/>
            <person name="Thompson L.S."/>
            <person name="Brettin T.S."/>
            <person name="Henrissat B."/>
            <person name="Wilson D.B."/>
            <person name="McBride M.J."/>
        </authorList>
    </citation>
    <scope>NUCLEOTIDE SEQUENCE [LARGE SCALE GENOMIC DNA]</scope>
    <source>
        <strain>ATCC 33406 / DSM 1761 / JCM 20678 / CIP 103989 / IAM 12607 / NBRC 15051 / NCIMB 9469 / D465</strain>
    </source>
</reference>
<organism>
    <name type="scientific">Cytophaga hutchinsonii (strain ATCC 33406 / DSM 1761 / CIP 103989 / NBRC 15051 / NCIMB 9469 / D465)</name>
    <dbReference type="NCBI Taxonomy" id="269798"/>
    <lineage>
        <taxon>Bacteria</taxon>
        <taxon>Pseudomonadati</taxon>
        <taxon>Bacteroidota</taxon>
        <taxon>Cytophagia</taxon>
        <taxon>Cytophagales</taxon>
        <taxon>Cytophagaceae</taxon>
        <taxon>Cytophaga</taxon>
    </lineage>
</organism>
<sequence length="460" mass="51206">MSTTTVTNHTDTIVALASPQGIGAIGVIRLSGPQAFDITSSVFPSKNIAAVPTHTVHVGNIEDEGRILDEVVVTVFKGPKSFTKEDVVEISCHGSTFIVKELLQLLLRKGARHAKPGEFTMRAFLNGRFDLAQAEAVADLISSDSHASHQVALQQMRGGFSDEIRKLREQLIHFASMVELELDFSEEDVEFADRTQLRKLIHEIKRVIDRLIHSFSLGNVIKNGVPTVIIGKPNAGKSTLLNTLLNEEKAIVSEIAGTTRDFIEDELNVEGITFRFIDTAGLREATDAIEAMGVKRTREKMTQASLVIYLFDVKSTSERELIRDLEELKALKAPFLVVGNKIDKREDAIITTFRNIDGIIYISAKQNIGIEELKQNLLEIIQYESFKQNDTLVTNMRHYESLRETRKALDEVLTGMDSQVPGDLLAQDIRQSLFHLGEITGDISTDDLLDNIFSKFCIGK</sequence>
<evidence type="ECO:0000255" key="1">
    <source>
        <dbReference type="HAMAP-Rule" id="MF_00379"/>
    </source>
</evidence>
<comment type="function">
    <text evidence="1">Exhibits a very high intrinsic GTPase hydrolysis rate. Involved in the addition of a carboxymethylaminomethyl (cmnm) group at the wobble position (U34) of certain tRNAs, forming tRNA-cmnm(5)s(2)U34.</text>
</comment>
<comment type="cofactor">
    <cofactor evidence="1">
        <name>K(+)</name>
        <dbReference type="ChEBI" id="CHEBI:29103"/>
    </cofactor>
    <text evidence="1">Binds 1 potassium ion per subunit.</text>
</comment>
<comment type="subunit">
    <text evidence="1">Homodimer. Heterotetramer of two MnmE and two MnmG subunits.</text>
</comment>
<comment type="subcellular location">
    <subcellularLocation>
        <location evidence="1">Cytoplasm</location>
    </subcellularLocation>
</comment>
<comment type="similarity">
    <text evidence="1">Belongs to the TRAFAC class TrmE-Era-EngA-EngB-Septin-like GTPase superfamily. TrmE GTPase family.</text>
</comment>
<accession>Q11TG8</accession>